<sequence length="116" mass="12616">MTDKKVTRLRRARKARLKMHELEVVRLCVFRSSQHIYAQVISADGSKVLASASTLDKDLRDGATGNIDAATKVGKLVAERAKAAGVSQVAFDRSGFKYHGRVKALADAAREGGLEF</sequence>
<protein>
    <recommendedName>
        <fullName evidence="1">Large ribosomal subunit protein uL18</fullName>
    </recommendedName>
    <alternativeName>
        <fullName evidence="2">50S ribosomal protein L18</fullName>
    </alternativeName>
</protein>
<evidence type="ECO:0000255" key="1">
    <source>
        <dbReference type="HAMAP-Rule" id="MF_01337"/>
    </source>
</evidence>
<evidence type="ECO:0000305" key="2"/>
<proteinExistence type="inferred from homology"/>
<feature type="chain" id="PRO_1000142705" description="Large ribosomal subunit protein uL18">
    <location>
        <begin position="1"/>
        <end position="116"/>
    </location>
</feature>
<name>RL18_PSEPW</name>
<gene>
    <name evidence="1" type="primary">rplR</name>
    <name type="ordered locus">PputW619_4733</name>
</gene>
<keyword id="KW-0687">Ribonucleoprotein</keyword>
<keyword id="KW-0689">Ribosomal protein</keyword>
<keyword id="KW-0694">RNA-binding</keyword>
<keyword id="KW-0699">rRNA-binding</keyword>
<comment type="function">
    <text evidence="1">This is one of the proteins that bind and probably mediate the attachment of the 5S RNA into the large ribosomal subunit, where it forms part of the central protuberance.</text>
</comment>
<comment type="subunit">
    <text evidence="1">Part of the 50S ribosomal subunit; part of the 5S rRNA/L5/L18/L25 subcomplex. Contacts the 5S and 23S rRNAs.</text>
</comment>
<comment type="similarity">
    <text evidence="1">Belongs to the universal ribosomal protein uL18 family.</text>
</comment>
<accession>B1JAJ6</accession>
<organism>
    <name type="scientific">Pseudomonas putida (strain W619)</name>
    <dbReference type="NCBI Taxonomy" id="390235"/>
    <lineage>
        <taxon>Bacteria</taxon>
        <taxon>Pseudomonadati</taxon>
        <taxon>Pseudomonadota</taxon>
        <taxon>Gammaproteobacteria</taxon>
        <taxon>Pseudomonadales</taxon>
        <taxon>Pseudomonadaceae</taxon>
        <taxon>Pseudomonas</taxon>
    </lineage>
</organism>
<dbReference type="EMBL" id="CP000949">
    <property type="protein sequence ID" value="ACA75209.1"/>
    <property type="molecule type" value="Genomic_DNA"/>
</dbReference>
<dbReference type="SMR" id="B1JAJ6"/>
<dbReference type="STRING" id="390235.PputW619_4733"/>
<dbReference type="KEGG" id="ppw:PputW619_4733"/>
<dbReference type="eggNOG" id="COG0256">
    <property type="taxonomic scope" value="Bacteria"/>
</dbReference>
<dbReference type="HOGENOM" id="CLU_098841_0_1_6"/>
<dbReference type="OrthoDB" id="9810939at2"/>
<dbReference type="GO" id="GO:0022625">
    <property type="term" value="C:cytosolic large ribosomal subunit"/>
    <property type="evidence" value="ECO:0007669"/>
    <property type="project" value="TreeGrafter"/>
</dbReference>
<dbReference type="GO" id="GO:0008097">
    <property type="term" value="F:5S rRNA binding"/>
    <property type="evidence" value="ECO:0007669"/>
    <property type="project" value="TreeGrafter"/>
</dbReference>
<dbReference type="GO" id="GO:0003735">
    <property type="term" value="F:structural constituent of ribosome"/>
    <property type="evidence" value="ECO:0007669"/>
    <property type="project" value="InterPro"/>
</dbReference>
<dbReference type="GO" id="GO:0006412">
    <property type="term" value="P:translation"/>
    <property type="evidence" value="ECO:0007669"/>
    <property type="project" value="UniProtKB-UniRule"/>
</dbReference>
<dbReference type="CDD" id="cd00432">
    <property type="entry name" value="Ribosomal_L18_L5e"/>
    <property type="match status" value="1"/>
</dbReference>
<dbReference type="FunFam" id="3.30.420.100:FF:000001">
    <property type="entry name" value="50S ribosomal protein L18"/>
    <property type="match status" value="1"/>
</dbReference>
<dbReference type="Gene3D" id="3.30.420.100">
    <property type="match status" value="1"/>
</dbReference>
<dbReference type="HAMAP" id="MF_01337_B">
    <property type="entry name" value="Ribosomal_uL18_B"/>
    <property type="match status" value="1"/>
</dbReference>
<dbReference type="InterPro" id="IPR004389">
    <property type="entry name" value="Ribosomal_uL18_bac-type"/>
</dbReference>
<dbReference type="InterPro" id="IPR005484">
    <property type="entry name" value="Ribosomal_uL18_bac/euk"/>
</dbReference>
<dbReference type="NCBIfam" id="TIGR00060">
    <property type="entry name" value="L18_bact"/>
    <property type="match status" value="1"/>
</dbReference>
<dbReference type="PANTHER" id="PTHR12899">
    <property type="entry name" value="39S RIBOSOMAL PROTEIN L18, MITOCHONDRIAL"/>
    <property type="match status" value="1"/>
</dbReference>
<dbReference type="PANTHER" id="PTHR12899:SF3">
    <property type="entry name" value="LARGE RIBOSOMAL SUBUNIT PROTEIN UL18M"/>
    <property type="match status" value="1"/>
</dbReference>
<dbReference type="Pfam" id="PF00861">
    <property type="entry name" value="Ribosomal_L18p"/>
    <property type="match status" value="1"/>
</dbReference>
<dbReference type="SUPFAM" id="SSF53137">
    <property type="entry name" value="Translational machinery components"/>
    <property type="match status" value="1"/>
</dbReference>
<reference key="1">
    <citation type="submission" date="2008-02" db="EMBL/GenBank/DDBJ databases">
        <title>Complete sequence of Pseudomonas putida W619.</title>
        <authorList>
            <person name="Copeland A."/>
            <person name="Lucas S."/>
            <person name="Lapidus A."/>
            <person name="Barry K."/>
            <person name="Detter J.C."/>
            <person name="Glavina del Rio T."/>
            <person name="Dalin E."/>
            <person name="Tice H."/>
            <person name="Pitluck S."/>
            <person name="Chain P."/>
            <person name="Malfatti S."/>
            <person name="Shin M."/>
            <person name="Vergez L."/>
            <person name="Schmutz J."/>
            <person name="Larimer F."/>
            <person name="Land M."/>
            <person name="Hauser L."/>
            <person name="Kyrpides N."/>
            <person name="Kim E."/>
            <person name="Taghavi S."/>
            <person name="Vangronsveld D."/>
            <person name="van der Lelie D."/>
            <person name="Richardson P."/>
        </authorList>
    </citation>
    <scope>NUCLEOTIDE SEQUENCE [LARGE SCALE GENOMIC DNA]</scope>
    <source>
        <strain>W619</strain>
    </source>
</reference>